<dbReference type="EMBL" id="M22728">
    <property type="protein sequence ID" value="AAA20942.1"/>
    <property type="molecule type" value="Genomic_DNA"/>
</dbReference>
<dbReference type="EMBL" id="M22727">
    <property type="protein sequence ID" value="AAA20942.1"/>
    <property type="status" value="JOINED"/>
    <property type="molecule type" value="Genomic_DNA"/>
</dbReference>
<dbReference type="EMBL" id="M15078">
    <property type="protein sequence ID" value="AAA30815.1"/>
    <property type="molecule type" value="Genomic_DNA"/>
</dbReference>
<dbReference type="PIR" id="A24295">
    <property type="entry name" value="TVCTMC"/>
</dbReference>
<dbReference type="PIR" id="I46085">
    <property type="entry name" value="I46085"/>
</dbReference>
<dbReference type="RefSeq" id="XP_011289745.1">
    <property type="nucleotide sequence ID" value="XM_011291443.2"/>
</dbReference>
<dbReference type="RefSeq" id="XP_011289746.1">
    <property type="nucleotide sequence ID" value="XM_011291444.4"/>
</dbReference>
<dbReference type="SMR" id="P68271"/>
<dbReference type="FunCoup" id="P68271">
    <property type="interactions" value="86"/>
</dbReference>
<dbReference type="STRING" id="9685.ENSFCAP00000045629"/>
<dbReference type="GlyCosmos" id="P68271">
    <property type="glycosylation" value="1 site, No reported glycans"/>
</dbReference>
<dbReference type="PaxDb" id="9685-ENSFCAP00000025333"/>
<dbReference type="Ensembl" id="ENSFCAT00000060177.2">
    <property type="protein sequence ID" value="ENSFCAP00000045629.1"/>
    <property type="gene ID" value="ENSFCAG00000041539.2"/>
</dbReference>
<dbReference type="GeneID" id="100379628"/>
<dbReference type="CTD" id="4609"/>
<dbReference type="VGNC" id="VGNC:81711">
    <property type="gene designation" value="MYC"/>
</dbReference>
<dbReference type="eggNOG" id="KOG2483">
    <property type="taxonomic scope" value="Eukaryota"/>
</dbReference>
<dbReference type="GeneTree" id="ENSGT00940000155285"/>
<dbReference type="HOGENOM" id="CLU_052560_0_0_1"/>
<dbReference type="InParanoid" id="P68271"/>
<dbReference type="OMA" id="FPYPLHD"/>
<dbReference type="OrthoDB" id="5964374at2759"/>
<dbReference type="Proteomes" id="UP000011712">
    <property type="component" value="Chromosome F2"/>
</dbReference>
<dbReference type="Bgee" id="ENSFCAG00000041539">
    <property type="expression patterns" value="Expressed in spleen and 11 other cell types or tissues"/>
</dbReference>
<dbReference type="GO" id="GO:0005737">
    <property type="term" value="C:cytoplasm"/>
    <property type="evidence" value="ECO:0007669"/>
    <property type="project" value="UniProtKB-SubCell"/>
</dbReference>
<dbReference type="GO" id="GO:0005730">
    <property type="term" value="C:nucleolus"/>
    <property type="evidence" value="ECO:0000250"/>
    <property type="project" value="UniProtKB"/>
</dbReference>
<dbReference type="GO" id="GO:0005654">
    <property type="term" value="C:nucleoplasm"/>
    <property type="evidence" value="ECO:0000250"/>
    <property type="project" value="UniProtKB"/>
</dbReference>
<dbReference type="GO" id="GO:0005634">
    <property type="term" value="C:nucleus"/>
    <property type="evidence" value="ECO:0000250"/>
    <property type="project" value="UniProtKB"/>
</dbReference>
<dbReference type="GO" id="GO:0003677">
    <property type="term" value="F:DNA binding"/>
    <property type="evidence" value="ECO:0000250"/>
    <property type="project" value="UniProtKB"/>
</dbReference>
<dbReference type="GO" id="GO:0000981">
    <property type="term" value="F:DNA-binding transcription factor activity, RNA polymerase II-specific"/>
    <property type="evidence" value="ECO:0000250"/>
    <property type="project" value="UniProtKB"/>
</dbReference>
<dbReference type="GO" id="GO:0070888">
    <property type="term" value="F:E-box binding"/>
    <property type="evidence" value="ECO:0000250"/>
    <property type="project" value="UniProtKB"/>
</dbReference>
<dbReference type="GO" id="GO:0046983">
    <property type="term" value="F:protein dimerization activity"/>
    <property type="evidence" value="ECO:0007669"/>
    <property type="project" value="InterPro"/>
</dbReference>
<dbReference type="GO" id="GO:0044877">
    <property type="term" value="F:protein-containing complex binding"/>
    <property type="evidence" value="ECO:0000250"/>
    <property type="project" value="UniProtKB"/>
</dbReference>
<dbReference type="GO" id="GO:0000978">
    <property type="term" value="F:RNA polymerase II cis-regulatory region sequence-specific DNA binding"/>
    <property type="evidence" value="ECO:0000318"/>
    <property type="project" value="GO_Central"/>
</dbReference>
<dbReference type="GO" id="GO:0006338">
    <property type="term" value="P:chromatin remodeling"/>
    <property type="evidence" value="ECO:0000250"/>
    <property type="project" value="UniProtKB"/>
</dbReference>
<dbReference type="GO" id="GO:0051276">
    <property type="term" value="P:chromosome organization"/>
    <property type="evidence" value="ECO:0000250"/>
    <property type="project" value="UniProtKB"/>
</dbReference>
<dbReference type="GO" id="GO:0006974">
    <property type="term" value="P:DNA damage response"/>
    <property type="evidence" value="ECO:0000250"/>
    <property type="project" value="UniProtKB"/>
</dbReference>
<dbReference type="GO" id="GO:0000082">
    <property type="term" value="P:G1/S transition of mitotic cell cycle"/>
    <property type="evidence" value="ECO:0000250"/>
    <property type="project" value="UniProtKB"/>
</dbReference>
<dbReference type="GO" id="GO:0006879">
    <property type="term" value="P:intracellular iron ion homeostasis"/>
    <property type="evidence" value="ECO:0000250"/>
    <property type="project" value="UniProtKB"/>
</dbReference>
<dbReference type="GO" id="GO:0000165">
    <property type="term" value="P:MAPK cascade"/>
    <property type="evidence" value="ECO:0000250"/>
    <property type="project" value="UniProtKB"/>
</dbReference>
<dbReference type="GO" id="GO:0043066">
    <property type="term" value="P:negative regulation of apoptotic process"/>
    <property type="evidence" value="ECO:0000250"/>
    <property type="project" value="UniProtKB"/>
</dbReference>
<dbReference type="GO" id="GO:0051782">
    <property type="term" value="P:negative regulation of cell division"/>
    <property type="evidence" value="ECO:0000250"/>
    <property type="project" value="UniProtKB"/>
</dbReference>
<dbReference type="GO" id="GO:0045656">
    <property type="term" value="P:negative regulation of monocyte differentiation"/>
    <property type="evidence" value="ECO:0000250"/>
    <property type="project" value="UniProtKB"/>
</dbReference>
<dbReference type="GO" id="GO:0032873">
    <property type="term" value="P:negative regulation of stress-activated MAPK cascade"/>
    <property type="evidence" value="ECO:0000250"/>
    <property type="project" value="UniProtKB"/>
</dbReference>
<dbReference type="GO" id="GO:0008284">
    <property type="term" value="P:positive regulation of cell population proliferation"/>
    <property type="evidence" value="ECO:0000318"/>
    <property type="project" value="GO_Central"/>
</dbReference>
<dbReference type="GO" id="GO:0045893">
    <property type="term" value="P:positive regulation of DNA-templated transcription"/>
    <property type="evidence" value="ECO:0000250"/>
    <property type="project" value="UniProtKB"/>
</dbReference>
<dbReference type="GO" id="GO:0050679">
    <property type="term" value="P:positive regulation of epithelial cell proliferation"/>
    <property type="evidence" value="ECO:0000250"/>
    <property type="project" value="UniProtKB"/>
</dbReference>
<dbReference type="GO" id="GO:0048146">
    <property type="term" value="P:positive regulation of fibroblast proliferation"/>
    <property type="evidence" value="ECO:0000250"/>
    <property type="project" value="UniProtKB"/>
</dbReference>
<dbReference type="GO" id="GO:0045944">
    <property type="term" value="P:positive regulation of transcription by RNA polymerase II"/>
    <property type="evidence" value="ECO:0000250"/>
    <property type="project" value="UniProtKB"/>
</dbReference>
<dbReference type="GO" id="GO:0006355">
    <property type="term" value="P:regulation of DNA-templated transcription"/>
    <property type="evidence" value="ECO:0000250"/>
    <property type="project" value="UniProtKB"/>
</dbReference>
<dbReference type="GO" id="GO:1904672">
    <property type="term" value="P:regulation of somatic stem cell population maintenance"/>
    <property type="evidence" value="ECO:0000250"/>
    <property type="project" value="UniProtKB"/>
</dbReference>
<dbReference type="GO" id="GO:0032204">
    <property type="term" value="P:regulation of telomere maintenance"/>
    <property type="evidence" value="ECO:0000250"/>
    <property type="project" value="UniProtKB"/>
</dbReference>
<dbReference type="GO" id="GO:0006357">
    <property type="term" value="P:regulation of transcription by RNA polymerase II"/>
    <property type="evidence" value="ECO:0000318"/>
    <property type="project" value="GO_Central"/>
</dbReference>
<dbReference type="GO" id="GO:0009410">
    <property type="term" value="P:response to xenobiotic stimulus"/>
    <property type="evidence" value="ECO:0000250"/>
    <property type="project" value="UniProtKB"/>
</dbReference>
<dbReference type="GO" id="GO:0016072">
    <property type="term" value="P:rRNA metabolic process"/>
    <property type="evidence" value="ECO:0000250"/>
    <property type="project" value="UniProtKB"/>
</dbReference>
<dbReference type="CDD" id="cd11458">
    <property type="entry name" value="bHLHzip_c-Myc"/>
    <property type="match status" value="1"/>
</dbReference>
<dbReference type="FunFam" id="4.10.280.10:FF:000019">
    <property type="entry name" value="Myc proto-oncogene protein"/>
    <property type="match status" value="1"/>
</dbReference>
<dbReference type="Gene3D" id="4.10.280.10">
    <property type="entry name" value="Helix-loop-helix DNA-binding domain"/>
    <property type="match status" value="1"/>
</dbReference>
<dbReference type="InterPro" id="IPR011598">
    <property type="entry name" value="bHLH_dom"/>
</dbReference>
<dbReference type="InterPro" id="IPR036638">
    <property type="entry name" value="HLH_DNA-bd_sf"/>
</dbReference>
<dbReference type="InterPro" id="IPR003327">
    <property type="entry name" value="Myc-LZ"/>
</dbReference>
<dbReference type="InterPro" id="IPR050433">
    <property type="entry name" value="Myc_transcription_factors"/>
</dbReference>
<dbReference type="InterPro" id="IPR002418">
    <property type="entry name" value="Tscrpt_reg_Myc"/>
</dbReference>
<dbReference type="InterPro" id="IPR012682">
    <property type="entry name" value="Tscrpt_reg_Myc_N"/>
</dbReference>
<dbReference type="PANTHER" id="PTHR45851">
    <property type="entry name" value="MYC PROTO-ONCOGENE"/>
    <property type="match status" value="1"/>
</dbReference>
<dbReference type="Pfam" id="PF00010">
    <property type="entry name" value="HLH"/>
    <property type="match status" value="1"/>
</dbReference>
<dbReference type="Pfam" id="PF02344">
    <property type="entry name" value="Myc-LZ"/>
    <property type="match status" value="1"/>
</dbReference>
<dbReference type="Pfam" id="PF01056">
    <property type="entry name" value="Myc_N"/>
    <property type="match status" value="1"/>
</dbReference>
<dbReference type="PIRSF" id="PIRSF001705">
    <property type="entry name" value="Myc_protein"/>
    <property type="match status" value="1"/>
</dbReference>
<dbReference type="PRINTS" id="PR00044">
    <property type="entry name" value="LEUZIPPRMYC"/>
</dbReference>
<dbReference type="SMART" id="SM00353">
    <property type="entry name" value="HLH"/>
    <property type="match status" value="1"/>
</dbReference>
<dbReference type="SUPFAM" id="SSF47459">
    <property type="entry name" value="HLH, helix-loop-helix DNA-binding domain"/>
    <property type="match status" value="1"/>
</dbReference>
<dbReference type="PROSITE" id="PS50888">
    <property type="entry name" value="BHLH"/>
    <property type="match status" value="1"/>
</dbReference>
<evidence type="ECO:0000250" key="1"/>
<evidence type="ECO:0000250" key="2">
    <source>
        <dbReference type="UniProtKB" id="P01106"/>
    </source>
</evidence>
<evidence type="ECO:0000250" key="3">
    <source>
        <dbReference type="UniProtKB" id="P01108"/>
    </source>
</evidence>
<evidence type="ECO:0000255" key="4">
    <source>
        <dbReference type="PROSITE-ProRule" id="PRU00981"/>
    </source>
</evidence>
<evidence type="ECO:0000256" key="5">
    <source>
        <dbReference type="SAM" id="MobiDB-lite"/>
    </source>
</evidence>
<evidence type="ECO:0000305" key="6"/>
<sequence>MPLNVSFANRNYDLDYDSVQPYFYCDEEENFYQQQQQSELQPPAPSEDIWKKFELLPTPPLSPSRRSGLCSPSYVAFASFSPRGDDDGGGGSFSTADQLEMVTELLGGDMVNQSFICDPDDETFIKNIIIQDCMWSGFSAAAKLVSEKLASYQAARKDSGSPSPARGPGGCPTSSLYLQDLTAAASECIDPSVVFPYPLNDSSSPKPCASPDSAAFSPSSDSLLSSAESSPRASPEPLALHEETPPTTSSDSEEEQEEEEEIDVVSVEKRQPPAKRSESGSPSAGGHSKPPHSPLVLKRCHVPTHQHNYAAPPSTRKDYPAAKRAKLDSGRVLKQISNNRKCISPRSSDTEENDKRRTHNVLERQRRNELKRSFFALRDQIPELENNEKAPKVVILKKATAYILSVQAGEQKLISEKDLLRKRREQLKHKLEQLRNSCA</sequence>
<reference key="1">
    <citation type="journal article" date="1986" name="Virology">
        <title>Conservation of the c-myc coding sequence in transduced feline v-myc genes.</title>
        <authorList>
            <person name="Stewart M.A."/>
            <person name="Forrest D."/>
            <person name="McFarlane R."/>
            <person name="Onions D.E."/>
            <person name="Wilkie N."/>
            <person name="Neil J.C."/>
        </authorList>
    </citation>
    <scope>NUCLEOTIDE SEQUENCE [GENOMIC DNA]</scope>
</reference>
<reference key="2">
    <citation type="journal article" date="1986" name="Gene">
        <title>Nucleotide sequence of the 1.2-kb 3'-region and genotype distribution of two common c-myc alleles of the domestic cat.</title>
        <authorList>
            <person name="Soe L.H."/>
            <person name="Ghosh A.K."/>
            <person name="Maxson R.E."/>
            <person name="Hoover E.A."/>
            <person name="Hardy W.D. Jr."/>
            <person name="Roy-Burman P."/>
        </authorList>
    </citation>
    <scope>NUCLEOTIDE SEQUENCE [GENOMIC DNA] OF 254-439</scope>
    <source>
        <tissue>Lymphosarcoma</tissue>
    </source>
</reference>
<feature type="chain" id="PRO_0000127292" description="Myc proto-oncogene protein">
    <location>
        <begin position="1"/>
        <end position="439"/>
    </location>
</feature>
<feature type="domain" description="bHLH" evidence="4">
    <location>
        <begin position="354"/>
        <end position="406"/>
    </location>
</feature>
<feature type="region of interest" description="Disordered" evidence="5">
    <location>
        <begin position="201"/>
        <end position="296"/>
    </location>
</feature>
<feature type="region of interest" description="Leucine-zipper">
    <location>
        <begin position="413"/>
        <end position="434"/>
    </location>
</feature>
<feature type="short sequence motif" description="9aaTAD" evidence="2">
    <location>
        <begin position="100"/>
        <end position="108"/>
    </location>
</feature>
<feature type="short sequence motif" description="UBR5-degron" evidence="2">
    <location>
        <begin position="355"/>
        <end position="364"/>
    </location>
</feature>
<feature type="compositionally biased region" description="Low complexity" evidence="5">
    <location>
        <begin position="207"/>
        <end position="238"/>
    </location>
</feature>
<feature type="compositionally biased region" description="Acidic residues" evidence="5">
    <location>
        <begin position="251"/>
        <end position="263"/>
    </location>
</feature>
<feature type="compositionally biased region" description="Basic and acidic residues" evidence="5">
    <location>
        <begin position="266"/>
        <end position="278"/>
    </location>
</feature>
<feature type="modified residue" description="Phosphoserine" evidence="2">
    <location>
        <position position="6"/>
    </location>
</feature>
<feature type="modified residue" description="Phosphothreonine; by GSK3; alternate" evidence="2">
    <location>
        <position position="58"/>
    </location>
</feature>
<feature type="modified residue" description="Phosphoserine; by DYRK2, GSK3 and CDK2" evidence="2">
    <location>
        <position position="62"/>
    </location>
</feature>
<feature type="modified residue" description="Phosphoserine" evidence="2">
    <location>
        <position position="71"/>
    </location>
</feature>
<feature type="modified residue" description="Phosphoserine" evidence="2">
    <location>
        <position position="81"/>
    </location>
</feature>
<feature type="modified residue" description="N6-acetyllysine; by PCAF; alternate" evidence="2">
    <location>
        <position position="143"/>
    </location>
</feature>
<feature type="modified residue" description="N6-acetyllysine; alternate" evidence="2">
    <location>
        <position position="148"/>
    </location>
</feature>
<feature type="modified residue" description="Phosphoserine" evidence="2">
    <location>
        <position position="151"/>
    </location>
</feature>
<feature type="modified residue" description="N6-acetyllysine; by PCAF" evidence="2">
    <location>
        <position position="157"/>
    </location>
</feature>
<feature type="modified residue" description="Phosphoserine" evidence="2">
    <location>
        <position position="159"/>
    </location>
</feature>
<feature type="modified residue" description="Phosphoserine" evidence="2">
    <location>
        <position position="161"/>
    </location>
</feature>
<feature type="modified residue" description="N6-acetyllysine; by PCAF" evidence="2">
    <location>
        <position position="275"/>
    </location>
</feature>
<feature type="modified residue" description="Phosphoserine" evidence="2">
    <location>
        <position position="293"/>
    </location>
</feature>
<feature type="modified residue" description="Phosphoserine" evidence="2">
    <location>
        <position position="314"/>
    </location>
</feature>
<feature type="modified residue" description="Phosphothreonine" evidence="2">
    <location>
        <position position="315"/>
    </location>
</feature>
<feature type="modified residue" description="N6-acetyllysine; by PCAF" evidence="2">
    <location>
        <position position="317"/>
    </location>
</feature>
<feature type="modified residue" description="N6-acetyllysine; by PCAF" evidence="2">
    <location>
        <position position="323"/>
    </location>
</feature>
<feature type="modified residue" description="Phosphoserine; by PIM2; in vitro" evidence="3">
    <location>
        <position position="329"/>
    </location>
</feature>
<feature type="modified residue" description="Phosphoserine" evidence="2">
    <location>
        <position position="344"/>
    </location>
</feature>
<feature type="modified residue" description="Phosphoserine" evidence="2">
    <location>
        <position position="347"/>
    </location>
</feature>
<feature type="modified residue" description="Phosphoserine" evidence="2">
    <location>
        <position position="348"/>
    </location>
</feature>
<feature type="modified residue" description="N6-acetyllysine; by PCAF" evidence="2">
    <location>
        <position position="371"/>
    </location>
</feature>
<feature type="glycosylation site" description="O-linked (GlcNAc) threonine; alternate" evidence="1">
    <location>
        <position position="58"/>
    </location>
</feature>
<feature type="cross-link" description="Glycyl lysine isopeptide (Lys-Gly) (interchain with G-Cter in SUMO2)" evidence="2">
    <location>
        <position position="52"/>
    </location>
</feature>
<feature type="cross-link" description="Glycyl lysine isopeptide (Lys-Gly) (interchain with G-Cter in SUMO2); alternate" evidence="2">
    <location>
        <position position="143"/>
    </location>
</feature>
<feature type="cross-link" description="Glycyl lysine isopeptide (Lys-Gly) (interchain with G-Cter in SUMO2); alternate" evidence="2">
    <location>
        <position position="148"/>
    </location>
</feature>
<feature type="cross-link" description="Glycyl lysine isopeptide (Lys-Gly) (interchain with G-Cter in SUMO2)" evidence="2">
    <location>
        <position position="298"/>
    </location>
</feature>
<feature type="sequence conflict" description="In Ref. 2; AAA30815." evidence="6" ref="2">
    <original>A</original>
    <variation>V</variation>
    <location>
        <position position="325"/>
    </location>
</feature>
<feature type="sequence conflict" description="In Ref. 2; AAA30815." evidence="6" ref="2">
    <original>N</original>
    <variation>T</variation>
    <location>
        <position position="360"/>
    </location>
</feature>
<protein>
    <recommendedName>
        <fullName>Myc proto-oncogene protein</fullName>
    </recommendedName>
    <alternativeName>
        <fullName>Proto-oncogene c-Myc</fullName>
    </alternativeName>
    <alternativeName>
        <fullName>Transcription factor p64</fullName>
    </alternativeName>
</protein>
<comment type="function">
    <text evidence="2 3">Transcription factor that binds DNA in a non-specific manner, yet also specifically recognizes the core sequence 5'-CAC[GA]TG-3'. Activates the transcription of growth-related genes. Binds to the VEGFA promoter, promoting VEGFA production and subsequent sprouting angiogenesis. Regulator of somatic reprogramming, controls self-renewal of embryonic stem cells. Functions with TAF6L to activate target gene expression through RNA polymerase II pause release (By similarity). Positively regulates transcription of HNRNPA1, HNRNPA2 and PTBP1 which in turn regulate splicing of pyruvate kinase PKM by binding repressively to sequences flanking PKM exon 9, inhibiting exon 9 inclusion and resulting in exon 10 inclusion and production of the PKM M2 isoform (By similarity).</text>
</comment>
<comment type="subunit">
    <text evidence="2 3">Efficient DNA binding requires dimerization with another bHLH protein. Binds DNA as a heterodimer with MAX (By similarity). Interacts with TAF1C and SPAG9. Interacts with PARP10. Interacts with KDM5A and KDM5B. Interacts (when phosphorylated at Thr-58 and Ser-62) with FBXW7. Interacts with PIM2. Interacts with RIOX1. The heterodimer MYC:MAX interacts with ABI1; the interaction may enhance MYC:MAX transcriptional activity. Interacts with TRIM6 (By similarity). Interacts with NPM1; the binary complex is recruited to the promoter of MYC target genes and enhances their transcription (By similarity). Interacts with CIP2A; leading to the stabilization of MYC (By similarity). Interacts with NUP205 (By similarity). Interacts with HEATR1; the interaction is required for localization of MYC to the nucleolus (By similarity).</text>
</comment>
<comment type="subcellular location">
    <subcellularLocation>
        <location evidence="2">Nucleus</location>
        <location evidence="2">Nucleoplasm</location>
    </subcellularLocation>
    <subcellularLocation>
        <location evidence="2">Nucleus</location>
        <location evidence="2">Nucleolus</location>
    </subcellularLocation>
    <subcellularLocation>
        <location evidence="2">Nucleus</location>
    </subcellularLocation>
    <subcellularLocation>
        <location evidence="2">Cytoplasm</location>
    </subcellularLocation>
    <subcellularLocation>
        <location evidence="2">Chromosome</location>
    </subcellularLocation>
    <text evidence="2">Association with chromatin is reduced by hyperphosphorylation. Localization to the nucleolus is dependent on HEATR1.</text>
</comment>
<comment type="domain">
    <text evidence="2">The 9aaTAD motif is a transactivation domain present in a large number of yeast and animal transcription factors.</text>
</comment>
<comment type="PTM">
    <text evidence="2 3">Phosphorylated by PRKDC (By similarity). Phosphorylation at Ser-329 by PIM2 leads to the stabilization of MYC (By similarity). Phosphorylation at Ser-62 by CDK2 prevents Ras-induced senescence. Phosphorylated at Ser-62 by DYRK2; this primes the protein for subsequent phosphorylation by GSK3B at Thr-58. Phosphorylation at Thr-58 and Ser-62 by GSK3 is required for ubiquitination and degradation by the proteasome. Dephosphorylation at multiple sites by the PNUTS-PP1 complex promotes MYC stability by preventing ubiquitination by the SCF(FBXW7) complex. Dephosphorylation at Ser-62 by protein phosphatase 2A (PPP2CA) promotes its degradation; interaction with PPP2CA is enhanced by AMBRA1 (By similarity).</text>
</comment>
<comment type="PTM">
    <text evidence="2 3">Ubiquitinated by the SCF(FBXW7) complex when phosphorylated at Thr-58 and Ser-62, leading to its degradation by the proteasome. Ubiquitination is counteracted by USP28 in the nucleoplasm and USP36 in the nucleolus, both interacting with of FBXW7, leading to its deubiquitination and preventing degradation. Also polyubiquitinated by the DCX(TRPC4AP) complex. Ubiquitinated by UBR5 when not forming a heterodimer with another bHLH protein, leading to its degradation: UBR5 recognizes and binds a degron that is only available upon heterodimer dissociation (By similarity). Ubiquitinated by TRIM6 in a phosphorylation-independent manner.</text>
</comment>
<keyword id="KW-0007">Acetylation</keyword>
<keyword id="KW-0010">Activator</keyword>
<keyword id="KW-0158">Chromosome</keyword>
<keyword id="KW-0963">Cytoplasm</keyword>
<keyword id="KW-0238">DNA-binding</keyword>
<keyword id="KW-0325">Glycoprotein</keyword>
<keyword id="KW-1017">Isopeptide bond</keyword>
<keyword id="KW-0539">Nucleus</keyword>
<keyword id="KW-0597">Phosphoprotein</keyword>
<keyword id="KW-0656">Proto-oncogene</keyword>
<keyword id="KW-1185">Reference proteome</keyword>
<keyword id="KW-0804">Transcription</keyword>
<keyword id="KW-0805">Transcription regulation</keyword>
<keyword id="KW-0832">Ubl conjugation</keyword>
<gene>
    <name type="primary">MYC</name>
</gene>
<organism>
    <name type="scientific">Felis catus</name>
    <name type="common">Cat</name>
    <name type="synonym">Felis silvestris catus</name>
    <dbReference type="NCBI Taxonomy" id="9685"/>
    <lineage>
        <taxon>Eukaryota</taxon>
        <taxon>Metazoa</taxon>
        <taxon>Chordata</taxon>
        <taxon>Craniata</taxon>
        <taxon>Vertebrata</taxon>
        <taxon>Euteleostomi</taxon>
        <taxon>Mammalia</taxon>
        <taxon>Eutheria</taxon>
        <taxon>Laurasiatheria</taxon>
        <taxon>Carnivora</taxon>
        <taxon>Feliformia</taxon>
        <taxon>Felidae</taxon>
        <taxon>Felinae</taxon>
        <taxon>Felis</taxon>
    </lineage>
</organism>
<proteinExistence type="inferred from homology"/>
<name>MYC_FELCA</name>
<accession>P68271</accession>
<accession>P06877</accession>
<accession>P06878</accession>
<accession>Q28413</accession>